<name>SPC24_BOVIN</name>
<proteinExistence type="evidence at transcript level"/>
<keyword id="KW-0131">Cell cycle</keyword>
<keyword id="KW-0132">Cell division</keyword>
<keyword id="KW-0137">Centromere</keyword>
<keyword id="KW-0158">Chromosome</keyword>
<keyword id="KW-0175">Coiled coil</keyword>
<keyword id="KW-0995">Kinetochore</keyword>
<keyword id="KW-0498">Mitosis</keyword>
<keyword id="KW-0539">Nucleus</keyword>
<keyword id="KW-0597">Phosphoprotein</keyword>
<keyword id="KW-1185">Reference proteome</keyword>
<sequence>MAAFRDMEEVSQGLLSLLGANRAEAQQRRLLGRHEQKVERLLETQDGAEKWLREILTTEKEVAQRLLDAKEQAHQGGVEVRQLEAELQRASEEDAHLKANLLQLTRELEELKEIEADLERQEKEVDEDTTVTIPSAVYVAQLYRRISKIEWDYECEPGMIKGIHHGPSVAQPIHLDSTQLSKKFISDYLWNLVDTEW</sequence>
<dbReference type="EMBL" id="BC114197">
    <property type="protein sequence ID" value="AAI14198.1"/>
    <property type="molecule type" value="mRNA"/>
</dbReference>
<dbReference type="RefSeq" id="NP_001068859.1">
    <property type="nucleotide sequence ID" value="NM_001075391.2"/>
</dbReference>
<dbReference type="SMR" id="Q24JY3"/>
<dbReference type="FunCoup" id="Q24JY3">
    <property type="interactions" value="489"/>
</dbReference>
<dbReference type="STRING" id="9913.ENSBTAP00000008128"/>
<dbReference type="PaxDb" id="9913-ENSBTAP00000008128"/>
<dbReference type="GeneID" id="509117"/>
<dbReference type="KEGG" id="bta:509117"/>
<dbReference type="CTD" id="147841"/>
<dbReference type="eggNOG" id="ENOG502S26V">
    <property type="taxonomic scope" value="Eukaryota"/>
</dbReference>
<dbReference type="InParanoid" id="Q24JY3"/>
<dbReference type="OrthoDB" id="6432863at2759"/>
<dbReference type="Proteomes" id="UP000009136">
    <property type="component" value="Unplaced"/>
</dbReference>
<dbReference type="GO" id="GO:0031262">
    <property type="term" value="C:Ndc80 complex"/>
    <property type="evidence" value="ECO:0000250"/>
    <property type="project" value="UniProtKB"/>
</dbReference>
<dbReference type="GO" id="GO:0005634">
    <property type="term" value="C:nucleus"/>
    <property type="evidence" value="ECO:0007669"/>
    <property type="project" value="UniProtKB-SubCell"/>
</dbReference>
<dbReference type="GO" id="GO:0051301">
    <property type="term" value="P:cell division"/>
    <property type="evidence" value="ECO:0007669"/>
    <property type="project" value="UniProtKB-KW"/>
</dbReference>
<dbReference type="GO" id="GO:0007059">
    <property type="term" value="P:chromosome segregation"/>
    <property type="evidence" value="ECO:0000318"/>
    <property type="project" value="GO_Central"/>
</dbReference>
<dbReference type="CDD" id="cd11565">
    <property type="entry name" value="RWD_Spc24"/>
    <property type="match status" value="1"/>
</dbReference>
<dbReference type="FunFam" id="3.30.160.570:FF:000001">
    <property type="entry name" value="SPC24, NDC80 kinetochore complex component"/>
    <property type="match status" value="1"/>
</dbReference>
<dbReference type="Gene3D" id="3.30.160.570">
    <property type="entry name" value="Ncd80 complex, Spc24 subunit"/>
    <property type="match status" value="1"/>
</dbReference>
<dbReference type="InterPro" id="IPR013252">
    <property type="entry name" value="Ndc80_Spc24"/>
</dbReference>
<dbReference type="PANTHER" id="PTHR22142">
    <property type="match status" value="1"/>
</dbReference>
<dbReference type="PANTHER" id="PTHR22142:SF2">
    <property type="entry name" value="KINETOCHORE PROTEIN SPC24"/>
    <property type="match status" value="1"/>
</dbReference>
<dbReference type="Pfam" id="PF08286">
    <property type="entry name" value="Spc24"/>
    <property type="match status" value="1"/>
</dbReference>
<evidence type="ECO:0000250" key="1"/>
<evidence type="ECO:0000250" key="2">
    <source>
        <dbReference type="UniProtKB" id="Q8NBT2"/>
    </source>
</evidence>
<evidence type="ECO:0000255" key="3"/>
<evidence type="ECO:0000305" key="4"/>
<accession>Q24JY3</accession>
<organism>
    <name type="scientific">Bos taurus</name>
    <name type="common">Bovine</name>
    <dbReference type="NCBI Taxonomy" id="9913"/>
    <lineage>
        <taxon>Eukaryota</taxon>
        <taxon>Metazoa</taxon>
        <taxon>Chordata</taxon>
        <taxon>Craniata</taxon>
        <taxon>Vertebrata</taxon>
        <taxon>Euteleostomi</taxon>
        <taxon>Mammalia</taxon>
        <taxon>Eutheria</taxon>
        <taxon>Laurasiatheria</taxon>
        <taxon>Artiodactyla</taxon>
        <taxon>Ruminantia</taxon>
        <taxon>Pecora</taxon>
        <taxon>Bovidae</taxon>
        <taxon>Bovinae</taxon>
        <taxon>Bos</taxon>
    </lineage>
</organism>
<feature type="chain" id="PRO_0000249558" description="Kinetochore protein Spc24">
    <location>
        <begin position="1"/>
        <end position="197"/>
    </location>
</feature>
<feature type="region of interest" description="Interaction with the N-terminus of SPBC25" evidence="1">
    <location>
        <begin position="1"/>
        <end position="131"/>
    </location>
</feature>
<feature type="region of interest" description="Interaction with the NDC80-CDCA1 subcomplex" evidence="1">
    <location>
        <begin position="1"/>
        <end position="69"/>
    </location>
</feature>
<feature type="region of interest" description="Interaction with the C-terminus of SPBC25" evidence="1">
    <location>
        <begin position="132"/>
        <end position="197"/>
    </location>
</feature>
<feature type="coiled-coil region" evidence="3">
    <location>
        <begin position="21"/>
        <end position="131"/>
    </location>
</feature>
<feature type="modified residue" description="Phosphoserine" evidence="2">
    <location>
        <position position="11"/>
    </location>
</feature>
<protein>
    <recommendedName>
        <fullName>Kinetochore protein Spc24</fullName>
    </recommendedName>
</protein>
<comment type="function">
    <text evidence="2">Acts as a component of the essential kinetochore-associated NDC80 complex, which is required for chromosome segregation and spindle checkpoint activity. Required for kinetochore integrity and the organization of stable microtubule binding sites in the outer plate of the kinetochore. The NDC80 complex synergistically enhances the affinity of the SKA1 complex for microtubules and may allow the NDC80 complex to track depolymerizing microtubules.</text>
</comment>
<comment type="subunit">
    <text evidence="1">Component of the NDC80 complex, which consists of NDC80/HEC1, CDCA1, SPBC24 and SPBC25. The NDC80 complex is formed by two subcomplexes composed of NDC80/HEC1-CDCA1 and SPBC24-SPBC25. Each subcomplex is formed by parallel interactions through the coiled-coil domains of individual subunits. Formation of a tetrameric complex is mediated by interactions between the C-terminal regions of both subunits of the NDC80/HEC1-CDCA1 subcomplex and the N-terminal regions of both subunits of the SPBC24-SPBC25 complex. The tetrameric NDC80 complex has an elongated rod-like structure with globular domains at either end (By similarity).</text>
</comment>
<comment type="subcellular location">
    <subcellularLocation>
        <location evidence="2">Nucleus</location>
    </subcellularLocation>
    <subcellularLocation>
        <location evidence="2">Chromosome</location>
        <location evidence="2">Centromere</location>
        <location evidence="2">Kinetochore</location>
    </subcellularLocation>
    <text evidence="2">Localizes to kinetochores from late prophase to anaphase. Localizes specifically to the outer plate of the kinetochore.</text>
</comment>
<comment type="similarity">
    <text evidence="4">Belongs to the SPC24 family.</text>
</comment>
<gene>
    <name type="primary">SPC24</name>
    <name type="synonym">SPBC24</name>
</gene>
<reference key="1">
    <citation type="submission" date="2006-02" db="EMBL/GenBank/DDBJ databases">
        <authorList>
            <consortium name="NIH - Mammalian Gene Collection (MGC) project"/>
        </authorList>
    </citation>
    <scope>NUCLEOTIDE SEQUENCE [LARGE SCALE MRNA]</scope>
    <source>
        <strain>Hereford</strain>
        <tissue>Thymus</tissue>
    </source>
</reference>